<dbReference type="EMBL" id="AE000516">
    <property type="protein sequence ID" value="AAK44281.1"/>
    <property type="molecule type" value="Genomic_DNA"/>
</dbReference>
<dbReference type="PIR" id="E70913">
    <property type="entry name" value="E70913"/>
</dbReference>
<dbReference type="RefSeq" id="WP_003400520.1">
    <property type="nucleotide sequence ID" value="NZ_KK341227.1"/>
</dbReference>
<dbReference type="SMR" id="P9WH30"/>
<dbReference type="GeneID" id="45424012"/>
<dbReference type="KEGG" id="mtc:MT0059"/>
<dbReference type="PATRIC" id="fig|83331.31.peg.59"/>
<dbReference type="HOGENOM" id="CLU_113441_5_3_11"/>
<dbReference type="Proteomes" id="UP000001020">
    <property type="component" value="Chromosome"/>
</dbReference>
<dbReference type="GO" id="GO:0005737">
    <property type="term" value="C:cytoplasm"/>
    <property type="evidence" value="ECO:0007669"/>
    <property type="project" value="UniProtKB-ARBA"/>
</dbReference>
<dbReference type="GO" id="GO:1990904">
    <property type="term" value="C:ribonucleoprotein complex"/>
    <property type="evidence" value="ECO:0007669"/>
    <property type="project" value="UniProtKB-KW"/>
</dbReference>
<dbReference type="GO" id="GO:0005840">
    <property type="term" value="C:ribosome"/>
    <property type="evidence" value="ECO:0007669"/>
    <property type="project" value="UniProtKB-KW"/>
</dbReference>
<dbReference type="GO" id="GO:0070181">
    <property type="term" value="F:small ribosomal subunit rRNA binding"/>
    <property type="evidence" value="ECO:0007669"/>
    <property type="project" value="TreeGrafter"/>
</dbReference>
<dbReference type="GO" id="GO:0003735">
    <property type="term" value="F:structural constituent of ribosome"/>
    <property type="evidence" value="ECO:0007669"/>
    <property type="project" value="InterPro"/>
</dbReference>
<dbReference type="GO" id="GO:0006412">
    <property type="term" value="P:translation"/>
    <property type="evidence" value="ECO:0007669"/>
    <property type="project" value="UniProtKB-UniRule"/>
</dbReference>
<dbReference type="CDD" id="cd00473">
    <property type="entry name" value="bS6"/>
    <property type="match status" value="1"/>
</dbReference>
<dbReference type="FunFam" id="3.30.70.60:FF:000002">
    <property type="entry name" value="30S ribosomal protein S6"/>
    <property type="match status" value="1"/>
</dbReference>
<dbReference type="Gene3D" id="3.30.70.60">
    <property type="match status" value="1"/>
</dbReference>
<dbReference type="HAMAP" id="MF_00360">
    <property type="entry name" value="Ribosomal_bS6"/>
    <property type="match status" value="1"/>
</dbReference>
<dbReference type="InterPro" id="IPR000529">
    <property type="entry name" value="Ribosomal_bS6"/>
</dbReference>
<dbReference type="InterPro" id="IPR020815">
    <property type="entry name" value="Ribosomal_bS6_CS"/>
</dbReference>
<dbReference type="InterPro" id="IPR035980">
    <property type="entry name" value="Ribosomal_bS6_sf"/>
</dbReference>
<dbReference type="InterPro" id="IPR020814">
    <property type="entry name" value="Ribosomal_S6_plastid/chlpt"/>
</dbReference>
<dbReference type="InterPro" id="IPR014717">
    <property type="entry name" value="Transl_elong_EF1B/ribsomal_bS6"/>
</dbReference>
<dbReference type="NCBIfam" id="TIGR00166">
    <property type="entry name" value="S6"/>
    <property type="match status" value="1"/>
</dbReference>
<dbReference type="PANTHER" id="PTHR21011">
    <property type="entry name" value="MITOCHONDRIAL 28S RIBOSOMAL PROTEIN S6"/>
    <property type="match status" value="1"/>
</dbReference>
<dbReference type="PANTHER" id="PTHR21011:SF1">
    <property type="entry name" value="SMALL RIBOSOMAL SUBUNIT PROTEIN BS6M"/>
    <property type="match status" value="1"/>
</dbReference>
<dbReference type="Pfam" id="PF01250">
    <property type="entry name" value="Ribosomal_S6"/>
    <property type="match status" value="1"/>
</dbReference>
<dbReference type="SUPFAM" id="SSF54995">
    <property type="entry name" value="Ribosomal protein S6"/>
    <property type="match status" value="1"/>
</dbReference>
<dbReference type="PROSITE" id="PS01048">
    <property type="entry name" value="RIBOSOMAL_S6"/>
    <property type="match status" value="1"/>
</dbReference>
<evidence type="ECO:0000250" key="1"/>
<evidence type="ECO:0000305" key="2"/>
<gene>
    <name type="primary">rpsF</name>
    <name type="ordered locus">MT0059</name>
</gene>
<organism>
    <name type="scientific">Mycobacterium tuberculosis (strain CDC 1551 / Oshkosh)</name>
    <dbReference type="NCBI Taxonomy" id="83331"/>
    <lineage>
        <taxon>Bacteria</taxon>
        <taxon>Bacillati</taxon>
        <taxon>Actinomycetota</taxon>
        <taxon>Actinomycetes</taxon>
        <taxon>Mycobacteriales</taxon>
        <taxon>Mycobacteriaceae</taxon>
        <taxon>Mycobacterium</taxon>
        <taxon>Mycobacterium tuberculosis complex</taxon>
    </lineage>
</organism>
<name>RS6_MYCTO</name>
<comment type="function">
    <text evidence="1">Binds together with bS18 to 16S ribosomal RNA.</text>
</comment>
<comment type="similarity">
    <text evidence="2">Belongs to the bacterial ribosomal protein bS6 family.</text>
</comment>
<sequence>MRPYEIMVILDPTLDERTVAPSLETFLNVVRKDGGKVEKVDIWGKRRLAYEIAKHAEGIYVVIDVKAAPATVSELDRQLSLNESVLRTKVMRTDKH</sequence>
<feature type="chain" id="PRO_0000428258" description="Small ribosomal subunit protein bS6">
    <location>
        <begin position="1"/>
        <end position="96"/>
    </location>
</feature>
<accession>P9WH30</accession>
<accession>L0T2F2</accession>
<accession>P66591</accession>
<accession>P71710</accession>
<keyword id="KW-1185">Reference proteome</keyword>
<keyword id="KW-0687">Ribonucleoprotein</keyword>
<keyword id="KW-0689">Ribosomal protein</keyword>
<keyword id="KW-0694">RNA-binding</keyword>
<keyword id="KW-0699">rRNA-binding</keyword>
<proteinExistence type="inferred from homology"/>
<reference key="1">
    <citation type="journal article" date="2002" name="J. Bacteriol.">
        <title>Whole-genome comparison of Mycobacterium tuberculosis clinical and laboratory strains.</title>
        <authorList>
            <person name="Fleischmann R.D."/>
            <person name="Alland D."/>
            <person name="Eisen J.A."/>
            <person name="Carpenter L."/>
            <person name="White O."/>
            <person name="Peterson J.D."/>
            <person name="DeBoy R.T."/>
            <person name="Dodson R.J."/>
            <person name="Gwinn M.L."/>
            <person name="Haft D.H."/>
            <person name="Hickey E.K."/>
            <person name="Kolonay J.F."/>
            <person name="Nelson W.C."/>
            <person name="Umayam L.A."/>
            <person name="Ermolaeva M.D."/>
            <person name="Salzberg S.L."/>
            <person name="Delcher A."/>
            <person name="Utterback T.R."/>
            <person name="Weidman J.F."/>
            <person name="Khouri H.M."/>
            <person name="Gill J."/>
            <person name="Mikula A."/>
            <person name="Bishai W."/>
            <person name="Jacobs W.R. Jr."/>
            <person name="Venter J.C."/>
            <person name="Fraser C.M."/>
        </authorList>
    </citation>
    <scope>NUCLEOTIDE SEQUENCE [LARGE SCALE GENOMIC DNA]</scope>
    <source>
        <strain>CDC 1551 / Oshkosh</strain>
    </source>
</reference>
<protein>
    <recommendedName>
        <fullName evidence="2">Small ribosomal subunit protein bS6</fullName>
    </recommendedName>
    <alternativeName>
        <fullName>30S ribosomal protein S6</fullName>
    </alternativeName>
</protein>